<evidence type="ECO:0000255" key="1">
    <source>
        <dbReference type="HAMAP-Rule" id="MF_01343"/>
    </source>
</evidence>
<evidence type="ECO:0000305" key="2"/>
<protein>
    <recommendedName>
        <fullName evidence="1">Small ribosomal subunit protein uS15</fullName>
    </recommendedName>
    <alternativeName>
        <fullName evidence="2">30S ribosomal protein S15</fullName>
    </alternativeName>
</protein>
<dbReference type="EMBL" id="CP000269">
    <property type="protein sequence ID" value="ABR88596.1"/>
    <property type="molecule type" value="Genomic_DNA"/>
</dbReference>
<dbReference type="RefSeq" id="WP_012079314.1">
    <property type="nucleotide sequence ID" value="NC_009659.1"/>
</dbReference>
<dbReference type="SMR" id="A6SY01"/>
<dbReference type="STRING" id="375286.mma_1458"/>
<dbReference type="KEGG" id="mms:mma_1458"/>
<dbReference type="eggNOG" id="COG0184">
    <property type="taxonomic scope" value="Bacteria"/>
</dbReference>
<dbReference type="HOGENOM" id="CLU_148518_0_0_4"/>
<dbReference type="OrthoDB" id="9799262at2"/>
<dbReference type="Proteomes" id="UP000006388">
    <property type="component" value="Chromosome"/>
</dbReference>
<dbReference type="GO" id="GO:0022627">
    <property type="term" value="C:cytosolic small ribosomal subunit"/>
    <property type="evidence" value="ECO:0007669"/>
    <property type="project" value="TreeGrafter"/>
</dbReference>
<dbReference type="GO" id="GO:0019843">
    <property type="term" value="F:rRNA binding"/>
    <property type="evidence" value="ECO:0007669"/>
    <property type="project" value="UniProtKB-UniRule"/>
</dbReference>
<dbReference type="GO" id="GO:0003735">
    <property type="term" value="F:structural constituent of ribosome"/>
    <property type="evidence" value="ECO:0007669"/>
    <property type="project" value="InterPro"/>
</dbReference>
<dbReference type="GO" id="GO:0006412">
    <property type="term" value="P:translation"/>
    <property type="evidence" value="ECO:0007669"/>
    <property type="project" value="UniProtKB-UniRule"/>
</dbReference>
<dbReference type="CDD" id="cd00353">
    <property type="entry name" value="Ribosomal_S15p_S13e"/>
    <property type="match status" value="1"/>
</dbReference>
<dbReference type="FunFam" id="1.10.287.10:FF:000002">
    <property type="entry name" value="30S ribosomal protein S15"/>
    <property type="match status" value="1"/>
</dbReference>
<dbReference type="Gene3D" id="6.10.250.3130">
    <property type="match status" value="1"/>
</dbReference>
<dbReference type="Gene3D" id="1.10.287.10">
    <property type="entry name" value="S15/NS1, RNA-binding"/>
    <property type="match status" value="1"/>
</dbReference>
<dbReference type="HAMAP" id="MF_01343_B">
    <property type="entry name" value="Ribosomal_uS15_B"/>
    <property type="match status" value="1"/>
</dbReference>
<dbReference type="InterPro" id="IPR000589">
    <property type="entry name" value="Ribosomal_uS15"/>
</dbReference>
<dbReference type="InterPro" id="IPR005290">
    <property type="entry name" value="Ribosomal_uS15_bac-type"/>
</dbReference>
<dbReference type="InterPro" id="IPR009068">
    <property type="entry name" value="uS15_NS1_RNA-bd_sf"/>
</dbReference>
<dbReference type="NCBIfam" id="TIGR00952">
    <property type="entry name" value="S15_bact"/>
    <property type="match status" value="1"/>
</dbReference>
<dbReference type="PANTHER" id="PTHR23321">
    <property type="entry name" value="RIBOSOMAL PROTEIN S15, BACTERIAL AND ORGANELLAR"/>
    <property type="match status" value="1"/>
</dbReference>
<dbReference type="PANTHER" id="PTHR23321:SF26">
    <property type="entry name" value="SMALL RIBOSOMAL SUBUNIT PROTEIN US15M"/>
    <property type="match status" value="1"/>
</dbReference>
<dbReference type="Pfam" id="PF00312">
    <property type="entry name" value="Ribosomal_S15"/>
    <property type="match status" value="1"/>
</dbReference>
<dbReference type="SMART" id="SM01387">
    <property type="entry name" value="Ribosomal_S15"/>
    <property type="match status" value="1"/>
</dbReference>
<dbReference type="SUPFAM" id="SSF47060">
    <property type="entry name" value="S15/NS1 RNA-binding domain"/>
    <property type="match status" value="1"/>
</dbReference>
<dbReference type="PROSITE" id="PS00362">
    <property type="entry name" value="RIBOSOMAL_S15"/>
    <property type="match status" value="1"/>
</dbReference>
<gene>
    <name evidence="1" type="primary">rpsO</name>
    <name type="ordered locus">mma_1458</name>
</gene>
<reference key="1">
    <citation type="journal article" date="2007" name="PLoS Genet.">
        <title>Genome analysis of Minibacterium massiliensis highlights the convergent evolution of water-living bacteria.</title>
        <authorList>
            <person name="Audic S."/>
            <person name="Robert C."/>
            <person name="Campagna B."/>
            <person name="Parinello H."/>
            <person name="Claverie J.-M."/>
            <person name="Raoult D."/>
            <person name="Drancourt M."/>
        </authorList>
    </citation>
    <scope>NUCLEOTIDE SEQUENCE [LARGE SCALE GENOMIC DNA]</scope>
    <source>
        <strain>Marseille</strain>
    </source>
</reference>
<accession>A6SY01</accession>
<organism>
    <name type="scientific">Janthinobacterium sp. (strain Marseille)</name>
    <name type="common">Minibacterium massiliensis</name>
    <dbReference type="NCBI Taxonomy" id="375286"/>
    <lineage>
        <taxon>Bacteria</taxon>
        <taxon>Pseudomonadati</taxon>
        <taxon>Pseudomonadota</taxon>
        <taxon>Betaproteobacteria</taxon>
        <taxon>Burkholderiales</taxon>
        <taxon>Oxalobacteraceae</taxon>
        <taxon>Janthinobacterium</taxon>
    </lineage>
</organism>
<sequence>MSLEKASKAAIVADNARGQNDTGSPEVQVALLTARINELNSHFKAHTKDHHSRRGLIMMVNRRKSLLSYLKGKDATRYRDLIVKLGLRK</sequence>
<feature type="chain" id="PRO_1000067691" description="Small ribosomal subunit protein uS15">
    <location>
        <begin position="1"/>
        <end position="89"/>
    </location>
</feature>
<proteinExistence type="inferred from homology"/>
<comment type="function">
    <text evidence="1">One of the primary rRNA binding proteins, it binds directly to 16S rRNA where it helps nucleate assembly of the platform of the 30S subunit by binding and bridging several RNA helices of the 16S rRNA.</text>
</comment>
<comment type="function">
    <text evidence="1">Forms an intersubunit bridge (bridge B4) with the 23S rRNA of the 50S subunit in the ribosome.</text>
</comment>
<comment type="subunit">
    <text evidence="1">Part of the 30S ribosomal subunit. Forms a bridge to the 50S subunit in the 70S ribosome, contacting the 23S rRNA.</text>
</comment>
<comment type="similarity">
    <text evidence="1">Belongs to the universal ribosomal protein uS15 family.</text>
</comment>
<keyword id="KW-0687">Ribonucleoprotein</keyword>
<keyword id="KW-0689">Ribosomal protein</keyword>
<keyword id="KW-0694">RNA-binding</keyword>
<keyword id="KW-0699">rRNA-binding</keyword>
<name>RS15_JANMA</name>